<organism>
    <name type="scientific">Rickettsia bellii (strain RML369-C)</name>
    <dbReference type="NCBI Taxonomy" id="336407"/>
    <lineage>
        <taxon>Bacteria</taxon>
        <taxon>Pseudomonadati</taxon>
        <taxon>Pseudomonadota</taxon>
        <taxon>Alphaproteobacteria</taxon>
        <taxon>Rickettsiales</taxon>
        <taxon>Rickettsiaceae</taxon>
        <taxon>Rickettsieae</taxon>
        <taxon>Rickettsia</taxon>
        <taxon>belli group</taxon>
    </lineage>
</organism>
<evidence type="ECO:0000250" key="1"/>
<evidence type="ECO:0000255" key="2"/>
<evidence type="ECO:0000255" key="3">
    <source>
        <dbReference type="PROSITE-ProRule" id="PRU00102"/>
    </source>
</evidence>
<evidence type="ECO:0000255" key="4">
    <source>
        <dbReference type="PROSITE-ProRule" id="PRU00107"/>
    </source>
</evidence>
<evidence type="ECO:0000305" key="5"/>
<reference key="1">
    <citation type="journal article" date="2006" name="PLoS Genet.">
        <title>Genome sequence of Rickettsia bellii illuminates the role of amoebae in gene exchanges between intracellular pathogens.</title>
        <authorList>
            <person name="Ogata H."/>
            <person name="La Scola B."/>
            <person name="Audic S."/>
            <person name="Renesto P."/>
            <person name="Blanc G."/>
            <person name="Robert C."/>
            <person name="Fournier P.-E."/>
            <person name="Claverie J.-M."/>
            <person name="Raoult D."/>
        </authorList>
    </citation>
    <scope>NUCLEOTIDE SEQUENCE [LARGE SCALE GENOMIC DNA]</scope>
    <source>
        <strain>RML369-C</strain>
    </source>
</reference>
<gene>
    <name type="ordered locus">RBE_0470</name>
</gene>
<dbReference type="EC" id="2.7.13.3"/>
<dbReference type="EMBL" id="CP000087">
    <property type="protein sequence ID" value="ABE04551.1"/>
    <property type="molecule type" value="Genomic_DNA"/>
</dbReference>
<dbReference type="SMR" id="Q1RJB3"/>
<dbReference type="KEGG" id="rbe:RBE_0470"/>
<dbReference type="eggNOG" id="COG5000">
    <property type="taxonomic scope" value="Bacteria"/>
</dbReference>
<dbReference type="HOGENOM" id="CLU_019564_1_0_5"/>
<dbReference type="OrthoDB" id="9776727at2"/>
<dbReference type="Proteomes" id="UP000001951">
    <property type="component" value="Chromosome"/>
</dbReference>
<dbReference type="GO" id="GO:0005886">
    <property type="term" value="C:plasma membrane"/>
    <property type="evidence" value="ECO:0007669"/>
    <property type="project" value="UniProtKB-SubCell"/>
</dbReference>
<dbReference type="GO" id="GO:0005524">
    <property type="term" value="F:ATP binding"/>
    <property type="evidence" value="ECO:0007669"/>
    <property type="project" value="UniProtKB-KW"/>
</dbReference>
<dbReference type="GO" id="GO:0000155">
    <property type="term" value="F:phosphorelay sensor kinase activity"/>
    <property type="evidence" value="ECO:0007669"/>
    <property type="project" value="InterPro"/>
</dbReference>
<dbReference type="CDD" id="cd06225">
    <property type="entry name" value="HAMP"/>
    <property type="match status" value="1"/>
</dbReference>
<dbReference type="CDD" id="cd00082">
    <property type="entry name" value="HisKA"/>
    <property type="match status" value="1"/>
</dbReference>
<dbReference type="Gene3D" id="1.10.287.130">
    <property type="match status" value="1"/>
</dbReference>
<dbReference type="Gene3D" id="6.10.340.10">
    <property type="match status" value="1"/>
</dbReference>
<dbReference type="Gene3D" id="3.30.565.10">
    <property type="entry name" value="Histidine kinase-like ATPase, C-terminal domain"/>
    <property type="match status" value="1"/>
</dbReference>
<dbReference type="InterPro" id="IPR050980">
    <property type="entry name" value="2C_sensor_his_kinase"/>
</dbReference>
<dbReference type="InterPro" id="IPR003660">
    <property type="entry name" value="HAMP_dom"/>
</dbReference>
<dbReference type="InterPro" id="IPR036890">
    <property type="entry name" value="HATPase_C_sf"/>
</dbReference>
<dbReference type="InterPro" id="IPR005467">
    <property type="entry name" value="His_kinase_dom"/>
</dbReference>
<dbReference type="InterPro" id="IPR003661">
    <property type="entry name" value="HisK_dim/P_dom"/>
</dbReference>
<dbReference type="InterPro" id="IPR036097">
    <property type="entry name" value="HisK_dim/P_sf"/>
</dbReference>
<dbReference type="InterPro" id="IPR045671">
    <property type="entry name" value="NtrY-like_N"/>
</dbReference>
<dbReference type="InterPro" id="IPR004358">
    <property type="entry name" value="Sig_transdc_His_kin-like_C"/>
</dbReference>
<dbReference type="PANTHER" id="PTHR44936">
    <property type="entry name" value="SENSOR PROTEIN CREC"/>
    <property type="match status" value="1"/>
</dbReference>
<dbReference type="PANTHER" id="PTHR44936:SF10">
    <property type="entry name" value="SENSOR PROTEIN RSTB"/>
    <property type="match status" value="1"/>
</dbReference>
<dbReference type="Pfam" id="PF00672">
    <property type="entry name" value="HAMP"/>
    <property type="match status" value="1"/>
</dbReference>
<dbReference type="Pfam" id="PF02518">
    <property type="entry name" value="HATPase_c"/>
    <property type="match status" value="1"/>
</dbReference>
<dbReference type="Pfam" id="PF00512">
    <property type="entry name" value="HisKA"/>
    <property type="match status" value="1"/>
</dbReference>
<dbReference type="Pfam" id="PF19312">
    <property type="entry name" value="NtrY_N"/>
    <property type="match status" value="1"/>
</dbReference>
<dbReference type="PRINTS" id="PR00344">
    <property type="entry name" value="BCTRLSENSOR"/>
</dbReference>
<dbReference type="SMART" id="SM00304">
    <property type="entry name" value="HAMP"/>
    <property type="match status" value="1"/>
</dbReference>
<dbReference type="SMART" id="SM00387">
    <property type="entry name" value="HATPase_c"/>
    <property type="match status" value="1"/>
</dbReference>
<dbReference type="SMART" id="SM00388">
    <property type="entry name" value="HisKA"/>
    <property type="match status" value="1"/>
</dbReference>
<dbReference type="SUPFAM" id="SSF55874">
    <property type="entry name" value="ATPase domain of HSP90 chaperone/DNA topoisomerase II/histidine kinase"/>
    <property type="match status" value="1"/>
</dbReference>
<dbReference type="SUPFAM" id="SSF158472">
    <property type="entry name" value="HAMP domain-like"/>
    <property type="match status" value="1"/>
</dbReference>
<dbReference type="SUPFAM" id="SSF47384">
    <property type="entry name" value="Homodimeric domain of signal transducing histidine kinase"/>
    <property type="match status" value="1"/>
</dbReference>
<dbReference type="PROSITE" id="PS50885">
    <property type="entry name" value="HAMP"/>
    <property type="match status" value="1"/>
</dbReference>
<dbReference type="PROSITE" id="PS50109">
    <property type="entry name" value="HIS_KIN"/>
    <property type="match status" value="1"/>
</dbReference>
<keyword id="KW-0067">ATP-binding</keyword>
<keyword id="KW-1003">Cell membrane</keyword>
<keyword id="KW-0418">Kinase</keyword>
<keyword id="KW-0472">Membrane</keyword>
<keyword id="KW-0547">Nucleotide-binding</keyword>
<keyword id="KW-0597">Phosphoprotein</keyword>
<keyword id="KW-0808">Transferase</keyword>
<keyword id="KW-0812">Transmembrane</keyword>
<keyword id="KW-1133">Transmembrane helix</keyword>
<keyword id="KW-0902">Two-component regulatory system</keyword>
<protein>
    <recommendedName>
        <fullName>Putative sensor histidine kinase NtrY-like</fullName>
        <ecNumber>2.7.13.3</ecNumber>
    </recommendedName>
</protein>
<feature type="chain" id="PRO_0000282372" description="Putative sensor histidine kinase NtrY-like">
    <location>
        <begin position="1"/>
        <end position="610"/>
    </location>
</feature>
<feature type="transmembrane region" description="Helical" evidence="2">
    <location>
        <begin position="18"/>
        <end position="38"/>
    </location>
</feature>
<feature type="transmembrane region" description="Helical" evidence="2">
    <location>
        <begin position="49"/>
        <end position="69"/>
    </location>
</feature>
<feature type="transmembrane region" description="Helical" evidence="2">
    <location>
        <begin position="92"/>
        <end position="112"/>
    </location>
</feature>
<feature type="transmembrane region" description="Helical" evidence="2">
    <location>
        <begin position="292"/>
        <end position="312"/>
    </location>
</feature>
<feature type="domain" description="HAMP" evidence="3">
    <location>
        <begin position="314"/>
        <end position="368"/>
    </location>
</feature>
<feature type="domain" description="Histidine kinase" evidence="4">
    <location>
        <begin position="385"/>
        <end position="596"/>
    </location>
</feature>
<feature type="modified residue" description="Phosphohistidine; by autocatalysis" evidence="4">
    <location>
        <position position="388"/>
    </location>
</feature>
<accession>Q1RJB3</accession>
<sequence>MPKLKIFLFKYLYSKRFIGILVAIAIIFSYFTYYTISIGTKNGAVNSSKVIWFLLIDLIIFLVLGILLTRKFFQSFFFKNSDQNTSKLQNRIVVAFSLAAAIPTIIVSISSAYFLNLSIQAWFDRKISVVLDQSIMVADSYIAEHKVLLRETALAVAEDLSDMYYDLIHNPALFTKTLNTEAEMRSLDEAIVLNKSTNTIIANSYLSFSLSFATIPAHLIKKADSCEPVEVKSDPTKIRMLIKLKEYNDVYLLVGRSIDNKIIDHIDATNGAAAEYHRLKNQIGNIQIKFSIIFIFIALLLLLIAISFGVIVTAKIVNPIKKLVIATDKVKSGDLTVQVPENEVDKDEIGTLYAAFNRMIKQLSRQQRDLVIAQRALAWSDVAKKVAHEIKNPLTPILLASERLLKKFSPEIKERAEFENYLKMIIRHTNDIKNIVSEFVLFARLPAPKFTNCDLIYVINNIVEARKLLNNNILYSFETNIDQFDFTCDTTQINQVMINLLKNAEESLEGSNQAAIKVNINTSEQFINITVLDNGRGFPPELIGKATESYVTTRSKGMGVGLAIVKRIVEEHCGVLDIANRETGGAVIDIRFNLEELKLKVKRHEIGVIS</sequence>
<name>NTRYL_RICBR</name>
<proteinExistence type="inferred from homology"/>
<comment type="function">
    <text evidence="1">Member of the two-component regulatory system RBE_0470/RBE_0312.</text>
</comment>
<comment type="catalytic activity">
    <reaction>
        <text>ATP + protein L-histidine = ADP + protein N-phospho-L-histidine.</text>
        <dbReference type="EC" id="2.7.13.3"/>
    </reaction>
</comment>
<comment type="subcellular location">
    <subcellularLocation>
        <location evidence="5">Cell membrane</location>
        <topology evidence="5">Multi-pass membrane protein</topology>
    </subcellularLocation>
</comment>